<organism>
    <name type="scientific">Haemophilus influenzae (strain ATCC 51907 / DSM 11121 / KW20 / Rd)</name>
    <dbReference type="NCBI Taxonomy" id="71421"/>
    <lineage>
        <taxon>Bacteria</taxon>
        <taxon>Pseudomonadati</taxon>
        <taxon>Pseudomonadota</taxon>
        <taxon>Gammaproteobacteria</taxon>
        <taxon>Pasteurellales</taxon>
        <taxon>Pasteurellaceae</taxon>
        <taxon>Haemophilus</taxon>
    </lineage>
</organism>
<gene>
    <name evidence="1" type="primary">ispF</name>
    <name type="ordered locus">HI_0671</name>
</gene>
<evidence type="ECO:0000255" key="1">
    <source>
        <dbReference type="HAMAP-Rule" id="MF_00107"/>
    </source>
</evidence>
<evidence type="ECO:0000269" key="2">
    <source>
    </source>
</evidence>
<evidence type="ECO:0000269" key="3">
    <source>
    </source>
</evidence>
<evidence type="ECO:0000305" key="4"/>
<evidence type="ECO:0007829" key="5">
    <source>
        <dbReference type="PDB" id="1JN1"/>
    </source>
</evidence>
<evidence type="ECO:0007829" key="6">
    <source>
        <dbReference type="PDB" id="1VH8"/>
    </source>
</evidence>
<protein>
    <recommendedName>
        <fullName evidence="1">2-C-methyl-D-erythritol 2,4-cyclodiphosphate synthase</fullName>
        <shortName evidence="1">MECDP-synthase</shortName>
        <shortName evidence="1">MECPP-synthase</shortName>
        <shortName evidence="1">MECPS</shortName>
        <ecNumber evidence="1">4.6.1.12</ecNumber>
    </recommendedName>
</protein>
<comment type="function">
    <text evidence="1">Involved in the biosynthesis of isopentenyl diphosphate (IPP) and dimethylallyl diphosphate (DMAPP), two major building blocks of isoprenoid compounds. Catalyzes the conversion of 4-diphosphocytidyl-2-C-methyl-D-erythritol 2-phosphate (CDP-ME2P) to 2-C-methyl-D-erythritol 2,4-cyclodiphosphate (ME-CPP) with a corresponding release of cytidine 5-monophosphate (CMP).</text>
</comment>
<comment type="catalytic activity">
    <reaction evidence="1">
        <text>4-CDP-2-C-methyl-D-erythritol 2-phosphate = 2-C-methyl-D-erythritol 2,4-cyclic diphosphate + CMP</text>
        <dbReference type="Rhea" id="RHEA:23864"/>
        <dbReference type="ChEBI" id="CHEBI:57919"/>
        <dbReference type="ChEBI" id="CHEBI:58483"/>
        <dbReference type="ChEBI" id="CHEBI:60377"/>
        <dbReference type="EC" id="4.6.1.12"/>
    </reaction>
</comment>
<comment type="cofactor">
    <cofactor evidence="1 3">
        <name>a divalent metal cation</name>
        <dbReference type="ChEBI" id="CHEBI:60240"/>
    </cofactor>
    <text evidence="1 3">Binds 1 divalent metal cation per subunit.</text>
</comment>
<comment type="pathway">
    <text evidence="1">Isoprenoid biosynthesis; isopentenyl diphosphate biosynthesis via DXP pathway; isopentenyl diphosphate from 1-deoxy-D-xylulose 5-phosphate: step 4/6.</text>
</comment>
<comment type="subunit">
    <text evidence="1 2 3">Homotrimer.</text>
</comment>
<comment type="similarity">
    <text evidence="1 4">Belongs to the IspF family.</text>
</comment>
<proteinExistence type="evidence at protein level"/>
<name>ISPF_HAEIN</name>
<dbReference type="EC" id="4.6.1.12" evidence="1"/>
<dbReference type="EMBL" id="L42023">
    <property type="protein sequence ID" value="AAC22331.1"/>
    <property type="molecule type" value="Genomic_DNA"/>
</dbReference>
<dbReference type="PIR" id="F64156">
    <property type="entry name" value="F64156"/>
</dbReference>
<dbReference type="RefSeq" id="NP_438831.1">
    <property type="nucleotide sequence ID" value="NC_000907.1"/>
</dbReference>
<dbReference type="PDB" id="1JN1">
    <property type="method" value="X-ray"/>
    <property type="resolution" value="2.90 A"/>
    <property type="chains" value="A/B/C=1-158"/>
</dbReference>
<dbReference type="PDB" id="1VH8">
    <property type="method" value="X-ray"/>
    <property type="resolution" value="2.35 A"/>
    <property type="chains" value="A/B/C/D/E/F=2-158"/>
</dbReference>
<dbReference type="PDB" id="1VHA">
    <property type="method" value="X-ray"/>
    <property type="resolution" value="2.35 A"/>
    <property type="chains" value="A/B/C/D/E/F=2-158"/>
</dbReference>
<dbReference type="PDB" id="5ESV">
    <property type="method" value="X-ray"/>
    <property type="resolution" value="3.10 A"/>
    <property type="chains" value="E/F/G=2-13, E/F/G=38-158"/>
</dbReference>
<dbReference type="PDB" id="5ESZ">
    <property type="method" value="X-ray"/>
    <property type="resolution" value="4.19 A"/>
    <property type="chains" value="C/G=2-14, C/G=38-158"/>
</dbReference>
<dbReference type="PDBsum" id="1JN1"/>
<dbReference type="PDBsum" id="1VH8"/>
<dbReference type="PDBsum" id="1VHA"/>
<dbReference type="PDBsum" id="5ESV"/>
<dbReference type="PDBsum" id="5ESZ"/>
<dbReference type="SMR" id="P44815"/>
<dbReference type="STRING" id="71421.HI_0671"/>
<dbReference type="EnsemblBacteria" id="AAC22331">
    <property type="protein sequence ID" value="AAC22331"/>
    <property type="gene ID" value="HI_0671"/>
</dbReference>
<dbReference type="KEGG" id="hin:HI_0671"/>
<dbReference type="PATRIC" id="fig|71421.8.peg.701"/>
<dbReference type="eggNOG" id="COG0245">
    <property type="taxonomic scope" value="Bacteria"/>
</dbReference>
<dbReference type="HOGENOM" id="CLU_084630_2_0_6"/>
<dbReference type="OrthoDB" id="9804336at2"/>
<dbReference type="PhylomeDB" id="P44815"/>
<dbReference type="BioCyc" id="HINF71421:G1GJ1-706-MONOMER"/>
<dbReference type="BRENDA" id="4.6.1.12">
    <property type="organism ID" value="2529"/>
</dbReference>
<dbReference type="UniPathway" id="UPA00056">
    <property type="reaction ID" value="UER00095"/>
</dbReference>
<dbReference type="EvolutionaryTrace" id="P44815"/>
<dbReference type="Proteomes" id="UP000000579">
    <property type="component" value="Chromosome"/>
</dbReference>
<dbReference type="GO" id="GO:0008685">
    <property type="term" value="F:2-C-methyl-D-erythritol 2,4-cyclodiphosphate synthase activity"/>
    <property type="evidence" value="ECO:0000318"/>
    <property type="project" value="GO_Central"/>
</dbReference>
<dbReference type="GO" id="GO:0046872">
    <property type="term" value="F:metal ion binding"/>
    <property type="evidence" value="ECO:0007669"/>
    <property type="project" value="UniProtKB-KW"/>
</dbReference>
<dbReference type="GO" id="GO:0019288">
    <property type="term" value="P:isopentenyl diphosphate biosynthetic process, methylerythritol 4-phosphate pathway"/>
    <property type="evidence" value="ECO:0007669"/>
    <property type="project" value="UniProtKB-UniRule"/>
</dbReference>
<dbReference type="GO" id="GO:0016114">
    <property type="term" value="P:terpenoid biosynthetic process"/>
    <property type="evidence" value="ECO:0007669"/>
    <property type="project" value="InterPro"/>
</dbReference>
<dbReference type="CDD" id="cd00554">
    <property type="entry name" value="MECDP_synthase"/>
    <property type="match status" value="1"/>
</dbReference>
<dbReference type="FunFam" id="3.30.1330.50:FF:000001">
    <property type="entry name" value="2-C-methyl-D-erythritol 2,4-cyclodiphosphate synthase"/>
    <property type="match status" value="1"/>
</dbReference>
<dbReference type="Gene3D" id="3.30.1330.50">
    <property type="entry name" value="2-C-methyl-D-erythritol 2,4-cyclodiphosphate synthase"/>
    <property type="match status" value="1"/>
</dbReference>
<dbReference type="HAMAP" id="MF_00107">
    <property type="entry name" value="IspF"/>
    <property type="match status" value="1"/>
</dbReference>
<dbReference type="InterPro" id="IPR003526">
    <property type="entry name" value="MECDP_synthase"/>
</dbReference>
<dbReference type="InterPro" id="IPR020555">
    <property type="entry name" value="MECDP_synthase_CS"/>
</dbReference>
<dbReference type="InterPro" id="IPR036571">
    <property type="entry name" value="MECDP_synthase_sf"/>
</dbReference>
<dbReference type="NCBIfam" id="TIGR00151">
    <property type="entry name" value="ispF"/>
    <property type="match status" value="1"/>
</dbReference>
<dbReference type="PANTHER" id="PTHR43181">
    <property type="entry name" value="2-C-METHYL-D-ERYTHRITOL 2,4-CYCLODIPHOSPHATE SYNTHASE, CHLOROPLASTIC"/>
    <property type="match status" value="1"/>
</dbReference>
<dbReference type="PANTHER" id="PTHR43181:SF1">
    <property type="entry name" value="2-C-METHYL-D-ERYTHRITOL 2,4-CYCLODIPHOSPHATE SYNTHASE, CHLOROPLASTIC"/>
    <property type="match status" value="1"/>
</dbReference>
<dbReference type="Pfam" id="PF02542">
    <property type="entry name" value="YgbB"/>
    <property type="match status" value="1"/>
</dbReference>
<dbReference type="SUPFAM" id="SSF69765">
    <property type="entry name" value="IpsF-like"/>
    <property type="match status" value="1"/>
</dbReference>
<dbReference type="PROSITE" id="PS01350">
    <property type="entry name" value="ISPF"/>
    <property type="match status" value="1"/>
</dbReference>
<sequence>MIRIGHGFDVHAFGEDRPLIIGGVEVPYHTGFIAHSDGDVALHALTDAILGAAALGDIGKLFPDTDMQYKNADSRGLLREAFRQVQEKGYKIGNVDITIIAQAPKMRPHIDAMRAKIAEDLQCDIEQVNVKATTTEKLGFTGRQEGIACEAVALLIRQ</sequence>
<reference key="1">
    <citation type="journal article" date="1995" name="Science">
        <title>Whole-genome random sequencing and assembly of Haemophilus influenzae Rd.</title>
        <authorList>
            <person name="Fleischmann R.D."/>
            <person name="Adams M.D."/>
            <person name="White O."/>
            <person name="Clayton R.A."/>
            <person name="Kirkness E.F."/>
            <person name="Kerlavage A.R."/>
            <person name="Bult C.J."/>
            <person name="Tomb J.-F."/>
            <person name="Dougherty B.A."/>
            <person name="Merrick J.M."/>
            <person name="McKenney K."/>
            <person name="Sutton G.G."/>
            <person name="FitzHugh W."/>
            <person name="Fields C.A."/>
            <person name="Gocayne J.D."/>
            <person name="Scott J.D."/>
            <person name="Shirley R."/>
            <person name="Liu L.-I."/>
            <person name="Glodek A."/>
            <person name="Kelley J.M."/>
            <person name="Weidman J.F."/>
            <person name="Phillips C.A."/>
            <person name="Spriggs T."/>
            <person name="Hedblom E."/>
            <person name="Cotton M.D."/>
            <person name="Utterback T.R."/>
            <person name="Hanna M.C."/>
            <person name="Nguyen D.T."/>
            <person name="Saudek D.M."/>
            <person name="Brandon R.C."/>
            <person name="Fine L.D."/>
            <person name="Fritchman J.L."/>
            <person name="Fuhrmann J.L."/>
            <person name="Geoghagen N.S.M."/>
            <person name="Gnehm C.L."/>
            <person name="McDonald L.A."/>
            <person name="Small K.V."/>
            <person name="Fraser C.M."/>
            <person name="Smith H.O."/>
            <person name="Venter J.C."/>
        </authorList>
    </citation>
    <scope>NUCLEOTIDE SEQUENCE [LARGE SCALE GENOMIC DNA]</scope>
    <source>
        <strain>ATCC 51907 / DSM 11121 / KW20 / Rd</strain>
    </source>
</reference>
<reference key="2">
    <citation type="journal article" date="1998" name="Electrophoresis">
        <title>Reference map of the low molecular mass proteins of Haemophilus influenzae.</title>
        <authorList>
            <person name="Fountoulakis M."/>
            <person name="Juranville J.-F."/>
            <person name="Roeder D."/>
            <person name="Evers S."/>
            <person name="Berndt P."/>
            <person name="Langen H."/>
        </authorList>
    </citation>
    <scope>IDENTIFICATION BY MASS SPECTROMETRY</scope>
    <source>
        <strain>ATCC 51907 / DSM 11121 / KW20 / Rd</strain>
    </source>
</reference>
<reference key="3">
    <citation type="journal article" date="2002" name="Proteins">
        <title>Structure of 2C-methyl-D-erythrol-2,4-cyclodiphosphate synthase from Haemophilus influenzae: activation by conformational transition.</title>
        <authorList>
            <person name="Lehmann C."/>
            <person name="Lim K."/>
            <person name="Toedt J."/>
            <person name="Krajewski W."/>
            <person name="Howard A."/>
            <person name="Eisenstein E."/>
            <person name="Herzberg O."/>
        </authorList>
    </citation>
    <scope>X-RAY CRYSTALLOGRAPHY (2.9 ANGSTROMS) IN COMPLEX WITH COBALT IONS</scope>
    <scope>SUBUNIT</scope>
</reference>
<reference key="4">
    <citation type="journal article" date="2005" name="Proteins">
        <title>Structural analysis of a set of proteins resulting from a bacterial genomics project.</title>
        <authorList>
            <person name="Badger J."/>
            <person name="Sauder J.M."/>
            <person name="Adams J.M."/>
            <person name="Antonysamy S."/>
            <person name="Bain K."/>
            <person name="Bergseid M.G."/>
            <person name="Buchanan S.G."/>
            <person name="Buchanan M.D."/>
            <person name="Batiyenko Y."/>
            <person name="Christopher J.A."/>
            <person name="Emtage S."/>
            <person name="Eroshkina A."/>
            <person name="Feil I."/>
            <person name="Furlong E.B."/>
            <person name="Gajiwala K.S."/>
            <person name="Gao X."/>
            <person name="He D."/>
            <person name="Hendle J."/>
            <person name="Huber A."/>
            <person name="Hoda K."/>
            <person name="Kearins P."/>
            <person name="Kissinger C."/>
            <person name="Laubert B."/>
            <person name="Lewis H.A."/>
            <person name="Lin J."/>
            <person name="Loomis K."/>
            <person name="Lorimer D."/>
            <person name="Louie G."/>
            <person name="Maletic M."/>
            <person name="Marsh C.D."/>
            <person name="Miller I."/>
            <person name="Molinari J."/>
            <person name="Muller-Dieckmann H.J."/>
            <person name="Newman J.M."/>
            <person name="Noland B.W."/>
            <person name="Pagarigan B."/>
            <person name="Park F."/>
            <person name="Peat T.S."/>
            <person name="Post K.W."/>
            <person name="Radojicic S."/>
            <person name="Ramos A."/>
            <person name="Romero R."/>
            <person name="Rutter M.E."/>
            <person name="Sanderson W.E."/>
            <person name="Schwinn K.D."/>
            <person name="Tresser J."/>
            <person name="Winhoven J."/>
            <person name="Wright T.A."/>
            <person name="Wu L."/>
            <person name="Xu J."/>
            <person name="Harris T.J.R."/>
        </authorList>
    </citation>
    <scope>X-RAY CRYSTALLOGRAPHY (2.35 ANGSTROMS) OF 2-158 IN COMPLEX WITH SUBSTRATE ANALOGS AND MANGANESE IONS</scope>
    <scope>COFACTOR</scope>
    <scope>SUBUNIT</scope>
</reference>
<accession>P44815</accession>
<keyword id="KW-0002">3D-structure</keyword>
<keyword id="KW-0414">Isoprene biosynthesis</keyword>
<keyword id="KW-0456">Lyase</keyword>
<keyword id="KW-0479">Metal-binding</keyword>
<keyword id="KW-1185">Reference proteome</keyword>
<feature type="chain" id="PRO_0000189472" description="2-C-methyl-D-erythritol 2,4-cyclodiphosphate synthase">
    <location>
        <begin position="1"/>
        <end position="158"/>
    </location>
</feature>
<feature type="binding site" evidence="1">
    <location>
        <begin position="9"/>
        <end position="11"/>
    </location>
    <ligand>
        <name>4-CDP-2-C-methyl-D-erythritol 2-phosphate</name>
        <dbReference type="ChEBI" id="CHEBI:57919"/>
    </ligand>
</feature>
<feature type="binding site" evidence="1">
    <location>
        <position position="9"/>
    </location>
    <ligand>
        <name>a divalent metal cation</name>
        <dbReference type="ChEBI" id="CHEBI:60240"/>
    </ligand>
</feature>
<feature type="binding site" evidence="1">
    <location>
        <position position="11"/>
    </location>
    <ligand>
        <name>a divalent metal cation</name>
        <dbReference type="ChEBI" id="CHEBI:60240"/>
    </ligand>
</feature>
<feature type="binding site" evidence="1">
    <location>
        <begin position="35"/>
        <end position="36"/>
    </location>
    <ligand>
        <name>4-CDP-2-C-methyl-D-erythritol 2-phosphate</name>
        <dbReference type="ChEBI" id="CHEBI:57919"/>
    </ligand>
</feature>
<feature type="binding site" evidence="1">
    <location>
        <position position="43"/>
    </location>
    <ligand>
        <name>a divalent metal cation</name>
        <dbReference type="ChEBI" id="CHEBI:60240"/>
    </ligand>
</feature>
<feature type="binding site" evidence="1">
    <location>
        <begin position="57"/>
        <end position="59"/>
    </location>
    <ligand>
        <name>4-CDP-2-C-methyl-D-erythritol 2-phosphate</name>
        <dbReference type="ChEBI" id="CHEBI:57919"/>
    </ligand>
</feature>
<feature type="binding site" evidence="1">
    <location>
        <begin position="62"/>
        <end position="66"/>
    </location>
    <ligand>
        <name>4-CDP-2-C-methyl-D-erythritol 2-phosphate</name>
        <dbReference type="ChEBI" id="CHEBI:57919"/>
    </ligand>
</feature>
<feature type="binding site" evidence="1">
    <location>
        <begin position="133"/>
        <end position="136"/>
    </location>
    <ligand>
        <name>4-CDP-2-C-methyl-D-erythritol 2-phosphate</name>
        <dbReference type="ChEBI" id="CHEBI:57919"/>
    </ligand>
</feature>
<feature type="binding site">
    <location>
        <begin position="140"/>
        <end position="143"/>
    </location>
    <ligand>
        <name>4-CDP-2-C-methyl-D-erythritol 2-phosphate</name>
        <dbReference type="ChEBI" id="CHEBI:57919"/>
    </ligand>
</feature>
<feature type="binding site" evidence="1">
    <location>
        <position position="140"/>
    </location>
    <ligand>
        <name>4-CDP-2-C-methyl-D-erythritol 2-phosphate</name>
        <dbReference type="ChEBI" id="CHEBI:57919"/>
    </ligand>
</feature>
<feature type="binding site" evidence="1">
    <location>
        <position position="143"/>
    </location>
    <ligand>
        <name>4-CDP-2-C-methyl-D-erythritol 2-phosphate</name>
        <dbReference type="ChEBI" id="CHEBI:57919"/>
    </ligand>
</feature>
<feature type="site" description="Transition state stabilizer" evidence="1">
    <location>
        <position position="35"/>
    </location>
</feature>
<feature type="site" description="Transition state stabilizer" evidence="1">
    <location>
        <position position="134"/>
    </location>
</feature>
<feature type="strand" evidence="6">
    <location>
        <begin position="2"/>
        <end position="12"/>
    </location>
</feature>
<feature type="strand" evidence="6">
    <location>
        <begin position="14"/>
        <end position="21"/>
    </location>
</feature>
<feature type="strand" evidence="6">
    <location>
        <begin position="24"/>
        <end position="32"/>
    </location>
</feature>
<feature type="helix" evidence="6">
    <location>
        <begin position="40"/>
        <end position="52"/>
    </location>
</feature>
<feature type="helix" evidence="6">
    <location>
        <begin position="58"/>
        <end position="60"/>
    </location>
</feature>
<feature type="helix" evidence="5">
    <location>
        <begin position="64"/>
        <end position="67"/>
    </location>
</feature>
<feature type="strand" evidence="5">
    <location>
        <begin position="68"/>
        <end position="70"/>
    </location>
</feature>
<feature type="helix" evidence="6">
    <location>
        <begin position="74"/>
        <end position="87"/>
    </location>
</feature>
<feature type="strand" evidence="6">
    <location>
        <begin position="90"/>
        <end position="100"/>
    </location>
</feature>
<feature type="strand" evidence="5">
    <location>
        <begin position="102"/>
        <end position="104"/>
    </location>
</feature>
<feature type="helix" evidence="6">
    <location>
        <begin position="107"/>
        <end position="120"/>
    </location>
</feature>
<feature type="helix" evidence="6">
    <location>
        <begin position="125"/>
        <end position="127"/>
    </location>
</feature>
<feature type="strand" evidence="6">
    <location>
        <begin position="128"/>
        <end position="133"/>
    </location>
</feature>
<feature type="helix" evidence="6">
    <location>
        <begin position="139"/>
        <end position="142"/>
    </location>
</feature>
<feature type="strand" evidence="6">
    <location>
        <begin position="145"/>
        <end position="157"/>
    </location>
</feature>